<comment type="function">
    <text evidence="1">Catalyzes the transfer of the enolpyruvyl moiety of phosphoenolpyruvate (PEP) to the 5-hydroxyl of shikimate-3-phosphate (S3P) to produce enolpyruvyl shikimate-3-phosphate and inorganic phosphate.</text>
</comment>
<comment type="catalytic activity">
    <reaction evidence="1">
        <text>3-phosphoshikimate + phosphoenolpyruvate = 5-O-(1-carboxyvinyl)-3-phosphoshikimate + phosphate</text>
        <dbReference type="Rhea" id="RHEA:21256"/>
        <dbReference type="ChEBI" id="CHEBI:43474"/>
        <dbReference type="ChEBI" id="CHEBI:57701"/>
        <dbReference type="ChEBI" id="CHEBI:58702"/>
        <dbReference type="ChEBI" id="CHEBI:145989"/>
        <dbReference type="EC" id="2.5.1.19"/>
    </reaction>
    <physiologicalReaction direction="left-to-right" evidence="1">
        <dbReference type="Rhea" id="RHEA:21257"/>
    </physiologicalReaction>
</comment>
<comment type="pathway">
    <text evidence="1">Metabolic intermediate biosynthesis; chorismate biosynthesis; chorismate from D-erythrose 4-phosphate and phosphoenolpyruvate: step 6/7.</text>
</comment>
<comment type="subunit">
    <text evidence="1">Monomer.</text>
</comment>
<comment type="subcellular location">
    <subcellularLocation>
        <location evidence="1">Cytoplasm</location>
    </subcellularLocation>
</comment>
<comment type="similarity">
    <text evidence="1">Belongs to the EPSP synthase family.</text>
</comment>
<evidence type="ECO:0000255" key="1">
    <source>
        <dbReference type="HAMAP-Rule" id="MF_00210"/>
    </source>
</evidence>
<reference key="1">
    <citation type="journal article" date="2005" name="Nucleic Acids Res.">
        <title>The genome sequence of Salmonella enterica serovar Choleraesuis, a highly invasive and resistant zoonotic pathogen.</title>
        <authorList>
            <person name="Chiu C.-H."/>
            <person name="Tang P."/>
            <person name="Chu C."/>
            <person name="Hu S."/>
            <person name="Bao Q."/>
            <person name="Yu J."/>
            <person name="Chou Y.-Y."/>
            <person name="Wang H.-S."/>
            <person name="Lee Y.-S."/>
        </authorList>
    </citation>
    <scope>NUCLEOTIDE SEQUENCE [LARGE SCALE GENOMIC DNA]</scope>
    <source>
        <strain>SC-B67</strain>
    </source>
</reference>
<dbReference type="EC" id="2.5.1.19" evidence="1"/>
<dbReference type="EMBL" id="AE017220">
    <property type="protein sequence ID" value="AAX64838.1"/>
    <property type="molecule type" value="Genomic_DNA"/>
</dbReference>
<dbReference type="RefSeq" id="WP_000445191.1">
    <property type="nucleotide sequence ID" value="NC_006905.1"/>
</dbReference>
<dbReference type="SMR" id="Q57R23"/>
<dbReference type="KEGG" id="sec:SCH_0932"/>
<dbReference type="HOGENOM" id="CLU_024321_0_0_6"/>
<dbReference type="UniPathway" id="UPA00053">
    <property type="reaction ID" value="UER00089"/>
</dbReference>
<dbReference type="Proteomes" id="UP000000538">
    <property type="component" value="Chromosome"/>
</dbReference>
<dbReference type="GO" id="GO:0005737">
    <property type="term" value="C:cytoplasm"/>
    <property type="evidence" value="ECO:0007669"/>
    <property type="project" value="UniProtKB-SubCell"/>
</dbReference>
<dbReference type="GO" id="GO:0003866">
    <property type="term" value="F:3-phosphoshikimate 1-carboxyvinyltransferase activity"/>
    <property type="evidence" value="ECO:0007669"/>
    <property type="project" value="UniProtKB-UniRule"/>
</dbReference>
<dbReference type="GO" id="GO:0008652">
    <property type="term" value="P:amino acid biosynthetic process"/>
    <property type="evidence" value="ECO:0007669"/>
    <property type="project" value="UniProtKB-KW"/>
</dbReference>
<dbReference type="GO" id="GO:0009073">
    <property type="term" value="P:aromatic amino acid family biosynthetic process"/>
    <property type="evidence" value="ECO:0007669"/>
    <property type="project" value="UniProtKB-KW"/>
</dbReference>
<dbReference type="GO" id="GO:0009423">
    <property type="term" value="P:chorismate biosynthetic process"/>
    <property type="evidence" value="ECO:0007669"/>
    <property type="project" value="UniProtKB-UniRule"/>
</dbReference>
<dbReference type="FunFam" id="3.65.10.10:FF:000003">
    <property type="entry name" value="3-phosphoshikimate 1-carboxyvinyltransferase"/>
    <property type="match status" value="1"/>
</dbReference>
<dbReference type="FunFam" id="3.65.10.10:FF:000004">
    <property type="entry name" value="3-phosphoshikimate 1-carboxyvinyltransferase"/>
    <property type="match status" value="1"/>
</dbReference>
<dbReference type="Gene3D" id="3.65.10.10">
    <property type="entry name" value="Enolpyruvate transferase domain"/>
    <property type="match status" value="2"/>
</dbReference>
<dbReference type="HAMAP" id="MF_00210">
    <property type="entry name" value="EPSP_synth"/>
    <property type="match status" value="1"/>
</dbReference>
<dbReference type="InterPro" id="IPR001986">
    <property type="entry name" value="Enolpyruvate_Tfrase_dom"/>
</dbReference>
<dbReference type="InterPro" id="IPR036968">
    <property type="entry name" value="Enolpyruvate_Tfrase_sf"/>
</dbReference>
<dbReference type="InterPro" id="IPR006264">
    <property type="entry name" value="EPSP_synthase"/>
</dbReference>
<dbReference type="InterPro" id="IPR023193">
    <property type="entry name" value="EPSP_synthase_CS"/>
</dbReference>
<dbReference type="InterPro" id="IPR013792">
    <property type="entry name" value="RNA3'P_cycl/enolpyr_Trfase_a/b"/>
</dbReference>
<dbReference type="NCBIfam" id="TIGR01356">
    <property type="entry name" value="aroA"/>
    <property type="match status" value="1"/>
</dbReference>
<dbReference type="PANTHER" id="PTHR21090">
    <property type="entry name" value="AROM/DEHYDROQUINATE SYNTHASE"/>
    <property type="match status" value="1"/>
</dbReference>
<dbReference type="PANTHER" id="PTHR21090:SF5">
    <property type="entry name" value="PENTAFUNCTIONAL AROM POLYPEPTIDE"/>
    <property type="match status" value="1"/>
</dbReference>
<dbReference type="Pfam" id="PF00275">
    <property type="entry name" value="EPSP_synthase"/>
    <property type="match status" value="1"/>
</dbReference>
<dbReference type="PIRSF" id="PIRSF000505">
    <property type="entry name" value="EPSPS"/>
    <property type="match status" value="1"/>
</dbReference>
<dbReference type="SUPFAM" id="SSF55205">
    <property type="entry name" value="EPT/RTPC-like"/>
    <property type="match status" value="1"/>
</dbReference>
<dbReference type="PROSITE" id="PS00104">
    <property type="entry name" value="EPSP_SYNTHASE_1"/>
    <property type="match status" value="1"/>
</dbReference>
<dbReference type="PROSITE" id="PS00885">
    <property type="entry name" value="EPSP_SYNTHASE_2"/>
    <property type="match status" value="1"/>
</dbReference>
<organism>
    <name type="scientific">Salmonella choleraesuis (strain SC-B67)</name>
    <dbReference type="NCBI Taxonomy" id="321314"/>
    <lineage>
        <taxon>Bacteria</taxon>
        <taxon>Pseudomonadati</taxon>
        <taxon>Pseudomonadota</taxon>
        <taxon>Gammaproteobacteria</taxon>
        <taxon>Enterobacterales</taxon>
        <taxon>Enterobacteriaceae</taxon>
        <taxon>Salmonella</taxon>
    </lineage>
</organism>
<name>AROA_SALCH</name>
<feature type="chain" id="PRO_1000012465" description="3-phosphoshikimate 1-carboxyvinyltransferase">
    <location>
        <begin position="1"/>
        <end position="427"/>
    </location>
</feature>
<feature type="active site" description="Proton acceptor" evidence="1">
    <location>
        <position position="313"/>
    </location>
</feature>
<feature type="binding site" evidence="1">
    <location>
        <position position="22"/>
    </location>
    <ligand>
        <name>3-phosphoshikimate</name>
        <dbReference type="ChEBI" id="CHEBI:145989"/>
    </ligand>
</feature>
<feature type="binding site" evidence="1">
    <location>
        <position position="22"/>
    </location>
    <ligand>
        <name>phosphoenolpyruvate</name>
        <dbReference type="ChEBI" id="CHEBI:58702"/>
    </ligand>
</feature>
<feature type="binding site" evidence="1">
    <location>
        <position position="23"/>
    </location>
    <ligand>
        <name>3-phosphoshikimate</name>
        <dbReference type="ChEBI" id="CHEBI:145989"/>
    </ligand>
</feature>
<feature type="binding site" evidence="1">
    <location>
        <position position="27"/>
    </location>
    <ligand>
        <name>3-phosphoshikimate</name>
        <dbReference type="ChEBI" id="CHEBI:145989"/>
    </ligand>
</feature>
<feature type="binding site" evidence="1">
    <location>
        <position position="96"/>
    </location>
    <ligand>
        <name>phosphoenolpyruvate</name>
        <dbReference type="ChEBI" id="CHEBI:58702"/>
    </ligand>
</feature>
<feature type="binding site" evidence="1">
    <location>
        <position position="124"/>
    </location>
    <ligand>
        <name>phosphoenolpyruvate</name>
        <dbReference type="ChEBI" id="CHEBI:58702"/>
    </ligand>
</feature>
<feature type="binding site" evidence="1">
    <location>
        <position position="169"/>
    </location>
    <ligand>
        <name>3-phosphoshikimate</name>
        <dbReference type="ChEBI" id="CHEBI:145989"/>
    </ligand>
</feature>
<feature type="binding site" evidence="1">
    <location>
        <position position="170"/>
    </location>
    <ligand>
        <name>3-phosphoshikimate</name>
        <dbReference type="ChEBI" id="CHEBI:145989"/>
    </ligand>
</feature>
<feature type="binding site" evidence="1">
    <location>
        <position position="171"/>
    </location>
    <ligand>
        <name>3-phosphoshikimate</name>
        <dbReference type="ChEBI" id="CHEBI:145989"/>
    </ligand>
</feature>
<feature type="binding site" evidence="1">
    <location>
        <position position="171"/>
    </location>
    <ligand>
        <name>phosphoenolpyruvate</name>
        <dbReference type="ChEBI" id="CHEBI:58702"/>
    </ligand>
</feature>
<feature type="binding site" evidence="1">
    <location>
        <position position="197"/>
    </location>
    <ligand>
        <name>3-phosphoshikimate</name>
        <dbReference type="ChEBI" id="CHEBI:145989"/>
    </ligand>
</feature>
<feature type="binding site" evidence="1">
    <location>
        <position position="313"/>
    </location>
    <ligand>
        <name>3-phosphoshikimate</name>
        <dbReference type="ChEBI" id="CHEBI:145989"/>
    </ligand>
</feature>
<feature type="binding site" evidence="1">
    <location>
        <position position="336"/>
    </location>
    <ligand>
        <name>3-phosphoshikimate</name>
        <dbReference type="ChEBI" id="CHEBI:145989"/>
    </ligand>
</feature>
<feature type="binding site" evidence="1">
    <location>
        <position position="340"/>
    </location>
    <ligand>
        <name>3-phosphoshikimate</name>
        <dbReference type="ChEBI" id="CHEBI:145989"/>
    </ligand>
</feature>
<feature type="binding site" evidence="1">
    <location>
        <position position="344"/>
    </location>
    <ligand>
        <name>phosphoenolpyruvate</name>
        <dbReference type="ChEBI" id="CHEBI:58702"/>
    </ligand>
</feature>
<feature type="binding site" evidence="1">
    <location>
        <position position="386"/>
    </location>
    <ligand>
        <name>phosphoenolpyruvate</name>
        <dbReference type="ChEBI" id="CHEBI:58702"/>
    </ligand>
</feature>
<feature type="binding site" evidence="1">
    <location>
        <position position="411"/>
    </location>
    <ligand>
        <name>phosphoenolpyruvate</name>
        <dbReference type="ChEBI" id="CHEBI:58702"/>
    </ligand>
</feature>
<proteinExistence type="inferred from homology"/>
<accession>Q57R23</accession>
<gene>
    <name evidence="1" type="primary">aroA</name>
    <name type="ordered locus">SCH_0932</name>
</gene>
<protein>
    <recommendedName>
        <fullName evidence="1">3-phosphoshikimate 1-carboxyvinyltransferase</fullName>
        <ecNumber evidence="1">2.5.1.19</ecNumber>
    </recommendedName>
    <alternativeName>
        <fullName evidence="1">5-enolpyruvylshikimate-3-phosphate synthase</fullName>
        <shortName evidence="1">EPSP synthase</shortName>
        <shortName evidence="1">EPSPS</shortName>
    </alternativeName>
</protein>
<keyword id="KW-0028">Amino-acid biosynthesis</keyword>
<keyword id="KW-0057">Aromatic amino acid biosynthesis</keyword>
<keyword id="KW-0963">Cytoplasm</keyword>
<keyword id="KW-0808">Transferase</keyword>
<sequence length="427" mass="46160">MESLTLQPIARVDGAINLPGSKSVSNRALLLAALACGKTVLTNLLDSDDVRHMLNALSALGINYTLSADRTRCDITGNGGALRAPGALELFLGNAGTAMRPLAAALCLGQNEIVLTGEPRMKERPIGHLVDSLRQGGANIDYLEQENYPPLRLRGGFTGGDIEVDGSVSSQFLTALLMTAPLAPKDTIIRVKGELVSKPYIDITLNLMKTFGVEIANHHYQQFVVKGGQQYHSPGRYLVEGDASSASYFLAAGAIKGGTVKVTGIGRKSMQGDIRFADVLEKMGATITWGDDFIACTRGELHAIDMDMNHIPDAAMTIATTALFAKGTTTLRNIYNWRVKETDRLFAMATELRKVGAEVEEGHDYIRITPPAKLQHADIGTYNDHRMAMCFSLVALSDTPVTILDPKCTAKTFPDYFEQLARMSTPA</sequence>